<evidence type="ECO:0000255" key="1">
    <source>
        <dbReference type="HAMAP-Rule" id="MF_00031"/>
    </source>
</evidence>
<name>RUVA_TREPS</name>
<proteinExistence type="inferred from homology"/>
<comment type="function">
    <text evidence="1">The RuvA-RuvB-RuvC complex processes Holliday junction (HJ) DNA during genetic recombination and DNA repair, while the RuvA-RuvB complex plays an important role in the rescue of blocked DNA replication forks via replication fork reversal (RFR). RuvA specifically binds to HJ cruciform DNA, conferring on it an open structure. The RuvB hexamer acts as an ATP-dependent pump, pulling dsDNA into and through the RuvAB complex. HJ branch migration allows RuvC to scan DNA until it finds its consensus sequence, where it cleaves and resolves the cruciform DNA.</text>
</comment>
<comment type="subunit">
    <text evidence="1">Homotetramer. Forms an RuvA(8)-RuvB(12)-Holliday junction (HJ) complex. HJ DNA is sandwiched between 2 RuvA tetramers; dsDNA enters through RuvA and exits via RuvB. An RuvB hexamer assembles on each DNA strand where it exits the tetramer. Each RuvB hexamer is contacted by two RuvA subunits (via domain III) on 2 adjacent RuvB subunits; this complex drives branch migration. In the full resolvosome a probable DNA-RuvA(4)-RuvB(12)-RuvC(2) complex forms which resolves the HJ.</text>
</comment>
<comment type="subcellular location">
    <subcellularLocation>
        <location evidence="1">Cytoplasm</location>
    </subcellularLocation>
</comment>
<comment type="domain">
    <text evidence="1">Has three domains with a flexible linker between the domains II and III and assumes an 'L' shape. Domain III is highly mobile and contacts RuvB.</text>
</comment>
<comment type="similarity">
    <text evidence="1">Belongs to the RuvA family.</text>
</comment>
<protein>
    <recommendedName>
        <fullName evidence="1">Holliday junction branch migration complex subunit RuvA</fullName>
    </recommendedName>
</protein>
<organism>
    <name type="scientific">Treponema pallidum subsp. pallidum (strain SS14)</name>
    <dbReference type="NCBI Taxonomy" id="455434"/>
    <lineage>
        <taxon>Bacteria</taxon>
        <taxon>Pseudomonadati</taxon>
        <taxon>Spirochaetota</taxon>
        <taxon>Spirochaetia</taxon>
        <taxon>Spirochaetales</taxon>
        <taxon>Treponemataceae</taxon>
        <taxon>Treponema</taxon>
    </lineage>
</organism>
<sequence>MFESISGILTLHERERLCVEVHGIEWEIAVSAYSSAAFGEVGSHVKVFTWLYHREDALRLFGFSNVQERTLFLSLTKVEGIGPKQALKVLSSISSQALCAALDTGDLCALQRIPGIGKKTAQRMLLALKGTLALTDAASCAQSQTDDRAAHPSNLGCAPHAREIEDLVTALVQMGYDRKMAAEVIAQESAALCSVGRSLYEEEATVLKRAILALSIAHPHAVAPAAE</sequence>
<reference key="1">
    <citation type="journal article" date="2008" name="BMC Microbiol.">
        <title>Complete genome sequence of Treponema pallidum ssp. pallidum strain SS14 determined with oligonucleotide arrays.</title>
        <authorList>
            <person name="Matejkova P."/>
            <person name="Strouhal M."/>
            <person name="Smajs D."/>
            <person name="Norris S.J."/>
            <person name="Palzkill T."/>
            <person name="Petrosino J.F."/>
            <person name="Sodergren E."/>
            <person name="Norton J.E."/>
            <person name="Singh J."/>
            <person name="Richmond T.A."/>
            <person name="Molla M.N."/>
            <person name="Albert T.J."/>
            <person name="Weinstock G.M."/>
        </authorList>
    </citation>
    <scope>NUCLEOTIDE SEQUENCE [LARGE SCALE GENOMIC DNA]</scope>
    <source>
        <strain>SS14</strain>
    </source>
</reference>
<dbReference type="EMBL" id="CP000805">
    <property type="protein sequence ID" value="ACD70964.1"/>
    <property type="molecule type" value="Genomic_DNA"/>
</dbReference>
<dbReference type="RefSeq" id="WP_010881990.1">
    <property type="nucleotide sequence ID" value="NC_021508.1"/>
</dbReference>
<dbReference type="SMR" id="B2S3D5"/>
<dbReference type="GeneID" id="93876312"/>
<dbReference type="KEGG" id="tpp:TPASS_0543"/>
<dbReference type="PATRIC" id="fig|455434.6.peg.541"/>
<dbReference type="Proteomes" id="UP000001202">
    <property type="component" value="Chromosome"/>
</dbReference>
<dbReference type="GO" id="GO:0005737">
    <property type="term" value="C:cytoplasm"/>
    <property type="evidence" value="ECO:0007669"/>
    <property type="project" value="UniProtKB-SubCell"/>
</dbReference>
<dbReference type="GO" id="GO:0048476">
    <property type="term" value="C:Holliday junction resolvase complex"/>
    <property type="evidence" value="ECO:0007669"/>
    <property type="project" value="UniProtKB-UniRule"/>
</dbReference>
<dbReference type="GO" id="GO:0005524">
    <property type="term" value="F:ATP binding"/>
    <property type="evidence" value="ECO:0007669"/>
    <property type="project" value="InterPro"/>
</dbReference>
<dbReference type="GO" id="GO:0000400">
    <property type="term" value="F:four-way junction DNA binding"/>
    <property type="evidence" value="ECO:0007669"/>
    <property type="project" value="UniProtKB-UniRule"/>
</dbReference>
<dbReference type="GO" id="GO:0009378">
    <property type="term" value="F:four-way junction helicase activity"/>
    <property type="evidence" value="ECO:0007669"/>
    <property type="project" value="InterPro"/>
</dbReference>
<dbReference type="GO" id="GO:0006310">
    <property type="term" value="P:DNA recombination"/>
    <property type="evidence" value="ECO:0007669"/>
    <property type="project" value="UniProtKB-UniRule"/>
</dbReference>
<dbReference type="GO" id="GO:0006281">
    <property type="term" value="P:DNA repair"/>
    <property type="evidence" value="ECO:0007669"/>
    <property type="project" value="UniProtKB-UniRule"/>
</dbReference>
<dbReference type="Gene3D" id="1.10.150.20">
    <property type="entry name" value="5' to 3' exonuclease, C-terminal subdomain"/>
    <property type="match status" value="1"/>
</dbReference>
<dbReference type="Gene3D" id="2.40.50.140">
    <property type="entry name" value="Nucleic acid-binding proteins"/>
    <property type="match status" value="1"/>
</dbReference>
<dbReference type="HAMAP" id="MF_00031">
    <property type="entry name" value="DNA_HJ_migration_RuvA"/>
    <property type="match status" value="1"/>
</dbReference>
<dbReference type="InterPro" id="IPR013849">
    <property type="entry name" value="DNA_helicase_Holl-junc_RuvA_I"/>
</dbReference>
<dbReference type="InterPro" id="IPR003583">
    <property type="entry name" value="Hlx-hairpin-Hlx_DNA-bd_motif"/>
</dbReference>
<dbReference type="InterPro" id="IPR012340">
    <property type="entry name" value="NA-bd_OB-fold"/>
</dbReference>
<dbReference type="InterPro" id="IPR000085">
    <property type="entry name" value="RuvA"/>
</dbReference>
<dbReference type="InterPro" id="IPR010994">
    <property type="entry name" value="RuvA_2-like"/>
</dbReference>
<dbReference type="NCBIfam" id="TIGR00084">
    <property type="entry name" value="ruvA"/>
    <property type="match status" value="1"/>
</dbReference>
<dbReference type="Pfam" id="PF14520">
    <property type="entry name" value="HHH_5"/>
    <property type="match status" value="1"/>
</dbReference>
<dbReference type="Pfam" id="PF01330">
    <property type="entry name" value="RuvA_N"/>
    <property type="match status" value="1"/>
</dbReference>
<dbReference type="SMART" id="SM00278">
    <property type="entry name" value="HhH1"/>
    <property type="match status" value="2"/>
</dbReference>
<dbReference type="SUPFAM" id="SSF50249">
    <property type="entry name" value="Nucleic acid-binding proteins"/>
    <property type="match status" value="1"/>
</dbReference>
<dbReference type="SUPFAM" id="SSF47781">
    <property type="entry name" value="RuvA domain 2-like"/>
    <property type="match status" value="1"/>
</dbReference>
<accession>B2S3D5</accession>
<keyword id="KW-0963">Cytoplasm</keyword>
<keyword id="KW-0227">DNA damage</keyword>
<keyword id="KW-0233">DNA recombination</keyword>
<keyword id="KW-0234">DNA repair</keyword>
<keyword id="KW-0238">DNA-binding</keyword>
<gene>
    <name evidence="1" type="primary">ruvA</name>
    <name type="ordered locus">TPASS_0543</name>
</gene>
<feature type="chain" id="PRO_1000090383" description="Holliday junction branch migration complex subunit RuvA">
    <location>
        <begin position="1"/>
        <end position="227"/>
    </location>
</feature>
<feature type="region of interest" description="Domain I" evidence="1">
    <location>
        <begin position="1"/>
        <end position="64"/>
    </location>
</feature>
<feature type="region of interest" description="Domain II" evidence="1">
    <location>
        <begin position="65"/>
        <end position="143"/>
    </location>
</feature>
<feature type="region of interest" description="Flexible linker" evidence="1">
    <location>
        <begin position="144"/>
        <end position="158"/>
    </location>
</feature>
<feature type="region of interest" description="Domain III" evidence="1">
    <location>
        <begin position="159"/>
        <end position="227"/>
    </location>
</feature>